<evidence type="ECO:0000255" key="1">
    <source>
        <dbReference type="HAMAP-Rule" id="MF_00074"/>
    </source>
</evidence>
<sequence>MMNDFELSLKSLGVSFTSKSIDKLRFYIEKVLLFGTRFNLVSNNDRNFDAVLLHVLDSVAGLPIIKDKNPRQVLDVGSGAGFPGIVLALFDNFRKYILLERSNKKATFLRMISLELGLDNIEVLERDVDKEQNKYEFITIRAFRDIREYARILKLILKDGGLIVAYKGKLNKIKFEVSHIESLFNKIEIKSSTMNDGKERNFLLLYK</sequence>
<comment type="function">
    <text evidence="1">Specifically methylates the N7 position of a guanine in 16S rRNA.</text>
</comment>
<comment type="subcellular location">
    <subcellularLocation>
        <location evidence="1">Cytoplasm</location>
    </subcellularLocation>
</comment>
<comment type="similarity">
    <text evidence="1">Belongs to the methyltransferase superfamily. RNA methyltransferase RsmG family.</text>
</comment>
<accession>A1QYX2</accession>
<reference key="1">
    <citation type="submission" date="2004-12" db="EMBL/GenBank/DDBJ databases">
        <title>The genome sequence of Borrelia hermsii and Borrelia turicatae: comparative analysis of two agents of endemic N. America relapsing fever.</title>
        <authorList>
            <person name="Porcella S.F."/>
            <person name="Raffel S.J."/>
            <person name="Schrumpf M.E."/>
            <person name="Montgomery B."/>
            <person name="Smith T."/>
            <person name="Schwan T.G."/>
        </authorList>
    </citation>
    <scope>NUCLEOTIDE SEQUENCE [LARGE SCALE GENOMIC DNA]</scope>
    <source>
        <strain>91E135</strain>
    </source>
</reference>
<feature type="chain" id="PRO_1000190215" description="Ribosomal RNA small subunit methyltransferase G">
    <location>
        <begin position="1"/>
        <end position="207"/>
    </location>
</feature>
<feature type="binding site" evidence="1">
    <location>
        <position position="77"/>
    </location>
    <ligand>
        <name>S-adenosyl-L-methionine</name>
        <dbReference type="ChEBI" id="CHEBI:59789"/>
    </ligand>
</feature>
<feature type="binding site" evidence="1">
    <location>
        <position position="82"/>
    </location>
    <ligand>
        <name>S-adenosyl-L-methionine</name>
        <dbReference type="ChEBI" id="CHEBI:59789"/>
    </ligand>
</feature>
<feature type="binding site" evidence="1">
    <location>
        <begin position="100"/>
        <end position="102"/>
    </location>
    <ligand>
        <name>S-adenosyl-L-methionine</name>
        <dbReference type="ChEBI" id="CHEBI:59789"/>
    </ligand>
</feature>
<feature type="binding site" evidence="1">
    <location>
        <position position="141"/>
    </location>
    <ligand>
        <name>S-adenosyl-L-methionine</name>
        <dbReference type="ChEBI" id="CHEBI:59789"/>
    </ligand>
</feature>
<gene>
    <name evidence="1" type="primary">rsmG</name>
    <name type="ordered locus">BT0177</name>
</gene>
<name>RSMG_BORT9</name>
<dbReference type="EC" id="2.1.1.-" evidence="1"/>
<dbReference type="EMBL" id="CP000049">
    <property type="protein sequence ID" value="AAX17514.1"/>
    <property type="molecule type" value="Genomic_DNA"/>
</dbReference>
<dbReference type="RefSeq" id="WP_011772133.1">
    <property type="nucleotide sequence ID" value="NC_008710.1"/>
</dbReference>
<dbReference type="SMR" id="A1QYX2"/>
<dbReference type="KEGG" id="btu:BT0177"/>
<dbReference type="eggNOG" id="COG0357">
    <property type="taxonomic scope" value="Bacteria"/>
</dbReference>
<dbReference type="HOGENOM" id="CLU_065341_2_0_12"/>
<dbReference type="Proteomes" id="UP000001205">
    <property type="component" value="Chromosome"/>
</dbReference>
<dbReference type="GO" id="GO:0005829">
    <property type="term" value="C:cytosol"/>
    <property type="evidence" value="ECO:0007669"/>
    <property type="project" value="TreeGrafter"/>
</dbReference>
<dbReference type="GO" id="GO:0070043">
    <property type="term" value="F:rRNA (guanine-N7-)-methyltransferase activity"/>
    <property type="evidence" value="ECO:0007669"/>
    <property type="project" value="UniProtKB-UniRule"/>
</dbReference>
<dbReference type="CDD" id="cd02440">
    <property type="entry name" value="AdoMet_MTases"/>
    <property type="match status" value="1"/>
</dbReference>
<dbReference type="Gene3D" id="3.40.50.150">
    <property type="entry name" value="Vaccinia Virus protein VP39"/>
    <property type="match status" value="1"/>
</dbReference>
<dbReference type="HAMAP" id="MF_00074">
    <property type="entry name" value="16SrRNA_methyltr_G"/>
    <property type="match status" value="1"/>
</dbReference>
<dbReference type="InterPro" id="IPR003682">
    <property type="entry name" value="rRNA_ssu_MeTfrase_G"/>
</dbReference>
<dbReference type="InterPro" id="IPR029063">
    <property type="entry name" value="SAM-dependent_MTases_sf"/>
</dbReference>
<dbReference type="NCBIfam" id="TIGR00138">
    <property type="entry name" value="rsmG_gidB"/>
    <property type="match status" value="1"/>
</dbReference>
<dbReference type="PANTHER" id="PTHR31760">
    <property type="entry name" value="S-ADENOSYL-L-METHIONINE-DEPENDENT METHYLTRANSFERASES SUPERFAMILY PROTEIN"/>
    <property type="match status" value="1"/>
</dbReference>
<dbReference type="PANTHER" id="PTHR31760:SF0">
    <property type="entry name" value="S-ADENOSYL-L-METHIONINE-DEPENDENT METHYLTRANSFERASES SUPERFAMILY PROTEIN"/>
    <property type="match status" value="1"/>
</dbReference>
<dbReference type="Pfam" id="PF02527">
    <property type="entry name" value="GidB"/>
    <property type="match status" value="1"/>
</dbReference>
<dbReference type="PIRSF" id="PIRSF003078">
    <property type="entry name" value="GidB"/>
    <property type="match status" value="1"/>
</dbReference>
<dbReference type="SUPFAM" id="SSF53335">
    <property type="entry name" value="S-adenosyl-L-methionine-dependent methyltransferases"/>
    <property type="match status" value="1"/>
</dbReference>
<keyword id="KW-0963">Cytoplasm</keyword>
<keyword id="KW-0489">Methyltransferase</keyword>
<keyword id="KW-1185">Reference proteome</keyword>
<keyword id="KW-0698">rRNA processing</keyword>
<keyword id="KW-0949">S-adenosyl-L-methionine</keyword>
<keyword id="KW-0808">Transferase</keyword>
<proteinExistence type="inferred from homology"/>
<organism>
    <name type="scientific">Borrelia turicatae (strain 91E135)</name>
    <dbReference type="NCBI Taxonomy" id="314724"/>
    <lineage>
        <taxon>Bacteria</taxon>
        <taxon>Pseudomonadati</taxon>
        <taxon>Spirochaetota</taxon>
        <taxon>Spirochaetia</taxon>
        <taxon>Spirochaetales</taxon>
        <taxon>Borreliaceae</taxon>
        <taxon>Borrelia</taxon>
    </lineage>
</organism>
<protein>
    <recommendedName>
        <fullName evidence="1">Ribosomal RNA small subunit methyltransferase G</fullName>
        <ecNumber evidence="1">2.1.1.-</ecNumber>
    </recommendedName>
    <alternativeName>
        <fullName evidence="1">16S rRNA 7-methylguanosine methyltransferase</fullName>
        <shortName evidence="1">16S rRNA m7G methyltransferase</shortName>
    </alternativeName>
</protein>